<proteinExistence type="inferred from homology"/>
<reference key="1">
    <citation type="submission" date="1994-05" db="EMBL/GenBank/DDBJ databases">
        <title>Nucleotide sequence of PR-operon of P22 is a mosaic of other lambdoid chromosomes and reveals functional implications for the late gene expression.</title>
        <authorList>
            <person name="Kroeger M."/>
            <person name="Hobom G."/>
        </authorList>
    </citation>
    <scope>NUCLEOTIDE SEQUENCE [GENOMIC DNA]</scope>
</reference>
<reference key="2">
    <citation type="journal article" date="2000" name="J. Bacteriol.">
        <title>Sequence of the genome of Salmonella bacteriophage P22.</title>
        <authorList>
            <person name="Vander Byl C.S."/>
            <person name="Kropinski A.M.B."/>
        </authorList>
    </citation>
    <scope>NUCLEOTIDE SEQUENCE [LARGE SCALE GENOMIC DNA]</scope>
</reference>
<reference key="3">
    <citation type="journal article" date="2003" name="J. Bacteriol.">
        <title>Corrected sequence of the bacteriophage P22 genome.</title>
        <authorList>
            <person name="Pedulla M.L."/>
            <person name="Ford M.E."/>
            <person name="Karthikeyan T."/>
            <person name="Houtz J.M."/>
            <person name="Hendrix R.W."/>
            <person name="Hatfull G.F."/>
            <person name="Poteete A.R."/>
            <person name="Gilcrease E.B."/>
            <person name="Winn-Stapley D.A."/>
            <person name="Casjens S.R."/>
        </authorList>
    </citation>
    <scope>NUCLEOTIDE SEQUENCE [LARGE SCALE GENOMIC DNA]</scope>
</reference>
<keyword id="KW-1185">Reference proteome</keyword>
<accession>Q38666</accession>
<accession>Q7PCE2</accession>
<organism>
    <name type="scientific">Salmonella phage P22</name>
    <name type="common">Bacteriophage P22</name>
    <dbReference type="NCBI Taxonomy" id="10754"/>
    <lineage>
        <taxon>Viruses</taxon>
        <taxon>Duplodnaviria</taxon>
        <taxon>Heunggongvirae</taxon>
        <taxon>Uroviricota</taxon>
        <taxon>Caudoviricetes</taxon>
        <taxon>Lederbergvirus</taxon>
    </lineage>
</organism>
<sequence length="58" mass="6438">MLSPSQSLQYQKESVERALTCANCGQKLHVLEVHVCEACCAELMSDPNSSMYEEEDDG</sequence>
<feature type="chain" id="PRO_0000077624" description="Protein ninF">
    <location>
        <begin position="1"/>
        <end position="58"/>
    </location>
</feature>
<feature type="sequence conflict" description="In Ref. 1 and 2." evidence="1" ref="1 2">
    <original>AC</original>
    <variation>GG</variation>
    <location>
        <begin position="38"/>
        <end position="39"/>
    </location>
</feature>
<organismHost>
    <name type="scientific">Salmonella typhimurium</name>
    <dbReference type="NCBI Taxonomy" id="90371"/>
</organismHost>
<evidence type="ECO:0000305" key="1"/>
<comment type="similarity">
    <text evidence="1">Belongs to the ninF family.</text>
</comment>
<dbReference type="EMBL" id="X78401">
    <property type="protein sequence ID" value="CAA55162.1"/>
    <property type="molecule type" value="Genomic_DNA"/>
</dbReference>
<dbReference type="EMBL" id="AF217253">
    <property type="protein sequence ID" value="AAF75034.1"/>
    <property type="molecule type" value="Genomic_DNA"/>
</dbReference>
<dbReference type="EMBL" id="BK000583">
    <property type="protein sequence ID" value="DAA01032.1"/>
    <property type="molecule type" value="Genomic_DNA"/>
</dbReference>
<dbReference type="RefSeq" id="YP_063727.1">
    <property type="nucleotide sequence ID" value="NC_002371.2"/>
</dbReference>
<dbReference type="GeneID" id="2944232"/>
<dbReference type="KEGG" id="vg:2944232"/>
<dbReference type="OrthoDB" id="25259at10239"/>
<dbReference type="Proteomes" id="UP000001795">
    <property type="component" value="Segment"/>
</dbReference>
<dbReference type="Proteomes" id="UP000007960">
    <property type="component" value="Segment"/>
</dbReference>
<dbReference type="InterPro" id="IPR008712">
    <property type="entry name" value="NinF"/>
</dbReference>
<dbReference type="Pfam" id="PF05810">
    <property type="entry name" value="NinF"/>
    <property type="match status" value="1"/>
</dbReference>
<protein>
    <recommendedName>
        <fullName>Protein ninF</fullName>
    </recommendedName>
</protein>
<name>NINF_BPP22</name>
<gene>
    <name type="primary">ninF</name>
</gene>